<name>KU70_RHIAP</name>
<keyword id="KW-0067">ATP-binding</keyword>
<keyword id="KW-0158">Chromosome</keyword>
<keyword id="KW-0227">DNA damage</keyword>
<keyword id="KW-0233">DNA recombination</keyword>
<keyword id="KW-0234">DNA repair</keyword>
<keyword id="KW-0238">DNA-binding</keyword>
<keyword id="KW-0347">Helicase</keyword>
<keyword id="KW-0378">Hydrolase</keyword>
<keyword id="KW-0547">Nucleotide-binding</keyword>
<keyword id="KW-0539">Nucleus</keyword>
<evidence type="ECO:0000250" key="1"/>
<evidence type="ECO:0000255" key="2">
    <source>
        <dbReference type="PROSITE-ProRule" id="PRU00186"/>
    </source>
</evidence>
<evidence type="ECO:0000256" key="3">
    <source>
        <dbReference type="SAM" id="MobiDB-lite"/>
    </source>
</evidence>
<evidence type="ECO:0000305" key="4"/>
<dbReference type="EC" id="3.6.4.12"/>
<dbReference type="EMBL" id="L41356">
    <property type="protein sequence ID" value="AAC41612.1"/>
    <property type="molecule type" value="mRNA"/>
</dbReference>
<dbReference type="PIR" id="S65788">
    <property type="entry name" value="S65788"/>
</dbReference>
<dbReference type="SMR" id="Q26228"/>
<dbReference type="GO" id="GO:0005694">
    <property type="term" value="C:chromosome"/>
    <property type="evidence" value="ECO:0007669"/>
    <property type="project" value="UniProtKB-SubCell"/>
</dbReference>
<dbReference type="GO" id="GO:0043564">
    <property type="term" value="C:Ku70:Ku80 complex"/>
    <property type="evidence" value="ECO:0007669"/>
    <property type="project" value="InterPro"/>
</dbReference>
<dbReference type="GO" id="GO:0005524">
    <property type="term" value="F:ATP binding"/>
    <property type="evidence" value="ECO:0007669"/>
    <property type="project" value="UniProtKB-KW"/>
</dbReference>
<dbReference type="GO" id="GO:0016887">
    <property type="term" value="F:ATP hydrolysis activity"/>
    <property type="evidence" value="ECO:0007669"/>
    <property type="project" value="RHEA"/>
</dbReference>
<dbReference type="GO" id="GO:0003684">
    <property type="term" value="F:damaged DNA binding"/>
    <property type="evidence" value="ECO:0007669"/>
    <property type="project" value="InterPro"/>
</dbReference>
<dbReference type="GO" id="GO:0003678">
    <property type="term" value="F:DNA helicase activity"/>
    <property type="evidence" value="ECO:0007669"/>
    <property type="project" value="InterPro"/>
</dbReference>
<dbReference type="GO" id="GO:0003690">
    <property type="term" value="F:double-stranded DNA binding"/>
    <property type="evidence" value="ECO:0007669"/>
    <property type="project" value="TreeGrafter"/>
</dbReference>
<dbReference type="GO" id="GO:0042162">
    <property type="term" value="F:telomeric DNA binding"/>
    <property type="evidence" value="ECO:0007669"/>
    <property type="project" value="InterPro"/>
</dbReference>
<dbReference type="GO" id="GO:0006310">
    <property type="term" value="P:DNA recombination"/>
    <property type="evidence" value="ECO:0007669"/>
    <property type="project" value="UniProtKB-KW"/>
</dbReference>
<dbReference type="GO" id="GO:0006303">
    <property type="term" value="P:double-strand break repair via nonhomologous end joining"/>
    <property type="evidence" value="ECO:0007669"/>
    <property type="project" value="InterPro"/>
</dbReference>
<dbReference type="GO" id="GO:0000723">
    <property type="term" value="P:telomere maintenance"/>
    <property type="evidence" value="ECO:0007669"/>
    <property type="project" value="InterPro"/>
</dbReference>
<dbReference type="CDD" id="cd00788">
    <property type="entry name" value="KU70"/>
    <property type="match status" value="1"/>
</dbReference>
<dbReference type="CDD" id="cd01458">
    <property type="entry name" value="vWA_ku"/>
    <property type="match status" value="1"/>
</dbReference>
<dbReference type="FunFam" id="2.40.290.10:FF:000001">
    <property type="entry name" value="X-ray repair cross complementing 6"/>
    <property type="match status" value="1"/>
</dbReference>
<dbReference type="FunFam" id="3.40.50.410:FF:000080">
    <property type="entry name" value="X-ray repair-complementing defective repair in Chinese hamster cells 6"/>
    <property type="match status" value="1"/>
</dbReference>
<dbReference type="Gene3D" id="1.10.1600.10">
    <property type="match status" value="1"/>
</dbReference>
<dbReference type="Gene3D" id="2.40.290.10">
    <property type="match status" value="1"/>
</dbReference>
<dbReference type="Gene3D" id="4.10.970.10">
    <property type="entry name" value="Ku70, bridge and pillars"/>
    <property type="match status" value="1"/>
</dbReference>
<dbReference type="Gene3D" id="1.10.720.30">
    <property type="entry name" value="SAP domain"/>
    <property type="match status" value="1"/>
</dbReference>
<dbReference type="Gene3D" id="3.40.50.410">
    <property type="entry name" value="von Willebrand factor, type A domain"/>
    <property type="match status" value="1"/>
</dbReference>
<dbReference type="InterPro" id="IPR006165">
    <property type="entry name" value="Ku70"/>
</dbReference>
<dbReference type="InterPro" id="IPR006164">
    <property type="entry name" value="Ku70/Ku80_beta-barrel_dom"/>
</dbReference>
<dbReference type="InterPro" id="IPR027388">
    <property type="entry name" value="Ku70_bridge/pillars_dom_sf"/>
</dbReference>
<dbReference type="InterPro" id="IPR047087">
    <property type="entry name" value="KU70_core_dom"/>
</dbReference>
<dbReference type="InterPro" id="IPR005160">
    <property type="entry name" value="Ku_C"/>
</dbReference>
<dbReference type="InterPro" id="IPR005161">
    <property type="entry name" value="Ku_N"/>
</dbReference>
<dbReference type="InterPro" id="IPR003034">
    <property type="entry name" value="SAP_dom"/>
</dbReference>
<dbReference type="InterPro" id="IPR036361">
    <property type="entry name" value="SAP_dom_sf"/>
</dbReference>
<dbReference type="InterPro" id="IPR016194">
    <property type="entry name" value="SPOC-like_C_dom_sf"/>
</dbReference>
<dbReference type="InterPro" id="IPR002035">
    <property type="entry name" value="VWF_A"/>
</dbReference>
<dbReference type="InterPro" id="IPR036465">
    <property type="entry name" value="vWFA_dom_sf"/>
</dbReference>
<dbReference type="NCBIfam" id="TIGR00578">
    <property type="entry name" value="ku70"/>
    <property type="match status" value="1"/>
</dbReference>
<dbReference type="PANTHER" id="PTHR12604">
    <property type="entry name" value="KU AUTOANTIGEN DNA HELICASE"/>
    <property type="match status" value="1"/>
</dbReference>
<dbReference type="PANTHER" id="PTHR12604:SF2">
    <property type="entry name" value="X-RAY REPAIR CROSS-COMPLEMENTING PROTEIN 6"/>
    <property type="match status" value="1"/>
</dbReference>
<dbReference type="Pfam" id="PF02735">
    <property type="entry name" value="Ku"/>
    <property type="match status" value="1"/>
</dbReference>
<dbReference type="Pfam" id="PF03730">
    <property type="entry name" value="Ku_C"/>
    <property type="match status" value="1"/>
</dbReference>
<dbReference type="Pfam" id="PF03731">
    <property type="entry name" value="Ku_N"/>
    <property type="match status" value="1"/>
</dbReference>
<dbReference type="PIRSF" id="PIRSF003033">
    <property type="entry name" value="Ku70"/>
    <property type="match status" value="1"/>
</dbReference>
<dbReference type="SMART" id="SM00559">
    <property type="entry name" value="Ku78"/>
    <property type="match status" value="1"/>
</dbReference>
<dbReference type="SMART" id="SM00513">
    <property type="entry name" value="SAP"/>
    <property type="match status" value="1"/>
</dbReference>
<dbReference type="SMART" id="SM00327">
    <property type="entry name" value="VWA"/>
    <property type="match status" value="1"/>
</dbReference>
<dbReference type="SUPFAM" id="SSF68906">
    <property type="entry name" value="SAP domain"/>
    <property type="match status" value="1"/>
</dbReference>
<dbReference type="SUPFAM" id="SSF100939">
    <property type="entry name" value="SPOC domain-like"/>
    <property type="match status" value="1"/>
</dbReference>
<dbReference type="SUPFAM" id="SSF53300">
    <property type="entry name" value="vWA-like"/>
    <property type="match status" value="1"/>
</dbReference>
<dbReference type="PROSITE" id="PS50800">
    <property type="entry name" value="SAP"/>
    <property type="match status" value="1"/>
</dbReference>
<proteinExistence type="evidence at transcript level"/>
<feature type="chain" id="PRO_0000210182" description="ATP-dependent DNA helicase 2 subunit 1">
    <location>
        <begin position="1"/>
        <end position="600"/>
    </location>
</feature>
<feature type="domain" description="Ku">
    <location>
        <begin position="247"/>
        <end position="456"/>
    </location>
</feature>
<feature type="domain" description="SAP" evidence="2">
    <location>
        <begin position="564"/>
        <end position="598"/>
    </location>
</feature>
<feature type="region of interest" description="Disordered" evidence="3">
    <location>
        <begin position="524"/>
        <end position="557"/>
    </location>
</feature>
<accession>Q26228</accession>
<organism>
    <name type="scientific">Rhipicephalus appendiculatus</name>
    <name type="common">Brown ear tick</name>
    <dbReference type="NCBI Taxonomy" id="34631"/>
    <lineage>
        <taxon>Eukaryota</taxon>
        <taxon>Metazoa</taxon>
        <taxon>Ecdysozoa</taxon>
        <taxon>Arthropoda</taxon>
        <taxon>Chelicerata</taxon>
        <taxon>Arachnida</taxon>
        <taxon>Acari</taxon>
        <taxon>Parasitiformes</taxon>
        <taxon>Ixodida</taxon>
        <taxon>Ixodoidea</taxon>
        <taxon>Ixodidae</taxon>
        <taxon>Rhipicephalinae</taxon>
        <taxon>Rhipicephalus</taxon>
        <taxon>Rhipicephalus</taxon>
    </lineage>
</organism>
<sequence length="600" mass="67405">MDQPWMRQDDDESDDESSTVDFGQAVDGILFLIDATEGMFEEVDGDTAFMQCIKAAKSTMLNKITSSPKDLVGIILFGTDKDNNPNRFKNVYVLQDLESPGAESVLKLEKLIADGPKKFKQEYGHGNVNMADVLWTCALMFSKSRAGQRRVLVLTNQDDPHKGSGDLDDKAVVKAKDLLQSGIELDLVHLKPPGDKKFRPQILYKNLVTDKENYEDGFPEASDKMEELLLRVRMKDHKKRRLMSLPFWLGPEVKMSVSLYNLVRPTGKPATTRLARDNNEELLSRRITYAMDSAEALMPGDISKTQEYGGRKAYFDICEVKQIKSMAPPGLQLLGFKPLSYLEKQPHVRPSHFVYPDEGSVRGSTRLFAALLQSCLRHRVAPICFWISRAAQAPKLVYLLAQEEERDPHGLQMVPPGFHVVQLPFSDDRRRLQALQEGTTKATPGLVALAREMAEKLRFTYHPDKFENPELQGFWSCLEALALDRDDAEHPKDYTRPDHEKMKAKAGEEMDAFLEAAFPDGCSATTAGSRKRTQAGEGGQAKKARSENQGSNVDVREEAKRGKLASLTVSVLRDFCKQEGLRCPSKKAEIVDCIKKHLKL</sequence>
<comment type="function">
    <text evidence="1">Single-stranded DNA-dependent ATP-dependent helicase. Involved in non-homologous end joining (NHEJ) DNA double strand break repair. DNA-binding is sequence-independent but has a high affinity to nicks in double-stranded DNA and to the ends of duplex DNA. Binds to naturally occurring chromosomal ends, and therefore provides chromosomal end protection. Required also for telomere recombination to repair telomeric ends in the absence of telomerase. KU70, of the KU70/KU80 heterodimer, binds to the stem loop of TLC1, the RNA component of telomerase. Involved in telomere maintenance. Interacts with telomeric repeats and subtelomeric sequences thereby controlling telomere length and protecting against subtelomeric rearrangement. Maintains telomeric chromatin, which is involved in silencing the expression of genes located at the telomere. Required for mating-type switching (By similarity).</text>
</comment>
<comment type="catalytic activity">
    <reaction>
        <text>ATP + H2O = ADP + phosphate + H(+)</text>
        <dbReference type="Rhea" id="RHEA:13065"/>
        <dbReference type="ChEBI" id="CHEBI:15377"/>
        <dbReference type="ChEBI" id="CHEBI:15378"/>
        <dbReference type="ChEBI" id="CHEBI:30616"/>
        <dbReference type="ChEBI" id="CHEBI:43474"/>
        <dbReference type="ChEBI" id="CHEBI:456216"/>
        <dbReference type="EC" id="3.6.4.12"/>
    </reaction>
</comment>
<comment type="subunit">
    <text evidence="1">Heterodimer of a 70 kDa and a 80 kDa subunit.</text>
</comment>
<comment type="subcellular location">
    <subcellularLocation>
        <location evidence="1">Nucleus</location>
    </subcellularLocation>
    <subcellularLocation>
        <location evidence="1">Chromosome</location>
    </subcellularLocation>
</comment>
<comment type="similarity">
    <text evidence="4">Belongs to the ku70 family.</text>
</comment>
<gene>
    <name type="primary">ku70</name>
</gene>
<reference key="1">
    <citation type="journal article" date="1996" name="Biochim. Biophys. Acta">
        <title>A tick homologue of the human DNA helicase II 70-kDa subunit.</title>
        <authorList>
            <person name="Paesen G.C."/>
            <person name="Zanotto P.M."/>
            <person name="Nuttall P.A."/>
        </authorList>
    </citation>
    <scope>NUCLEOTIDE SEQUENCE [MRNA]</scope>
    <source>
        <tissue>Salivary gland</tissue>
    </source>
</reference>
<protein>
    <recommendedName>
        <fullName>ATP-dependent DNA helicase 2 subunit 1</fullName>
        <ecNumber>3.6.4.12</ecNumber>
    </recommendedName>
    <alternativeName>
        <fullName>ATP-dependent DNA helicase II 70 kDa subunit</fullName>
    </alternativeName>
    <alternativeName>
        <fullName>ATP-dependent DNA helicase II subunit Ku70</fullName>
    </alternativeName>
    <alternativeName>
        <fullName>Ku autoantigen protein p70 homolog</fullName>
    </alternativeName>
</protein>